<gene>
    <name type="primary">Ift25</name>
    <name type="synonym">Hspb11</name>
</gene>
<keyword id="KW-0106">Calcium</keyword>
<keyword id="KW-0966">Cell projection</keyword>
<keyword id="KW-0969">Cilium</keyword>
<keyword id="KW-0221">Differentiation</keyword>
<keyword id="KW-0479">Metal-binding</keyword>
<keyword id="KW-0653">Protein transport</keyword>
<keyword id="KW-1185">Reference proteome</keyword>
<keyword id="KW-0744">Spermatogenesis</keyword>
<keyword id="KW-0346">Stress response</keyword>
<keyword id="KW-0813">Transport</keyword>
<protein>
    <recommendedName>
        <fullName>Intraflagellar transport protein 25 homolog</fullName>
    </recommendedName>
    <alternativeName>
        <fullName>Heat shock protein beta-11</fullName>
        <shortName>Hspb11</shortName>
    </alternativeName>
    <alternativeName>
        <fullName>Placental protein 25</fullName>
        <shortName>PP25</shortName>
    </alternativeName>
</protein>
<comment type="function">
    <text evidence="3 4 6">Component of the IFT complex B required for sonic hedgehog/SHH signaling. May mediate transport of SHH components: required for the export of SMO and PTCH1 receptors out of the cilium and the accumulation of GLI2 at the ciliary tip in response to activation of the SHH pathway, suggesting it is involved in the dynamic transport of SHH signaling molecules within the cilium. Not required for ciliary assembly (PubMed:22595669). Its role in intraflagellar transport is mainly seen in tissues rich in ciliated cells such as kidney and testis. Essential for male fertility, spermiogenesis and sperm flagella formation (PubMed:28430876). Plays a role in the early development of the kidney (PubMed:29626631). May be involved in the regulation of ureteric bud initiation (PubMed:29626631).</text>
</comment>
<comment type="subunit">
    <text evidence="2 4">Component of the IFT complex B, at least composed of IFT20, IFT22, IFT25, IFT27, IFT46, IFT52, TRAF3IP1/IFT54, IFT57, IFT74, IFT80, IFT81, and IFT88 (PubMed:19253336). Interacts with IFT27 (PubMed:28430876). Interacts with IFT88 (PubMed:19253336).</text>
</comment>
<comment type="subcellular location">
    <subcellularLocation>
        <location evidence="2">Cell projection</location>
        <location evidence="2">Cilium</location>
    </subcellularLocation>
</comment>
<comment type="tissue specificity">
    <text evidence="4 5">Expressed predominantly in the testis (at protein level).</text>
</comment>
<comment type="disruption phenotype">
    <text evidence="3 4 5 6">Null mutants retain the ability to ciliate and survive through gestation. They die shortly after birth due to different phenotypes reminiscent of Shh signaling defects: polydactyly, cleft palate, lung isomerisms, and structural heart defects (PubMed:22595669). Conditional knockout in male germ cells results in infertility, abnormal sperm morphology, significantly reduced sperm count and sperm mobility and disruption of sperm lipid rafts (PubMed:28430876, PubMed:28964737). Mutant mice with germline deletion of IFT25 die shortly after birth with structural defects in most organs including the kidneys, where duplicated collecting duct system and/or duplex kidney is often observed (PubMed:29626631).</text>
</comment>
<comment type="similarity">
    <text evidence="7">Belongs to the IFT25 family.</text>
</comment>
<comment type="caution">
    <text evidence="8">Was initially classified as a member of the small heat shock family protein. However, it was later shown that it is not the case (PubMed:22595669).</text>
</comment>
<dbReference type="EMBL" id="AK013636">
    <property type="protein sequence ID" value="BAB28934.1"/>
    <property type="molecule type" value="mRNA"/>
</dbReference>
<dbReference type="EMBL" id="AK157651">
    <property type="protein sequence ID" value="BAE34145.1"/>
    <property type="molecule type" value="mRNA"/>
</dbReference>
<dbReference type="EMBL" id="AL645723">
    <property type="status" value="NOT_ANNOTATED_CDS"/>
    <property type="molecule type" value="Genomic_DNA"/>
</dbReference>
<dbReference type="EMBL" id="CH466527">
    <property type="protein sequence ID" value="EDL30781.1"/>
    <property type="molecule type" value="Genomic_DNA"/>
</dbReference>
<dbReference type="EMBL" id="CH466527">
    <property type="protein sequence ID" value="EDL30782.1"/>
    <property type="molecule type" value="Genomic_DNA"/>
</dbReference>
<dbReference type="EMBL" id="CH466527">
    <property type="protein sequence ID" value="EDL30783.1"/>
    <property type="molecule type" value="Genomic_DNA"/>
</dbReference>
<dbReference type="CCDS" id="CCDS18435.1"/>
<dbReference type="RefSeq" id="NP_001342388.1">
    <property type="nucleotide sequence ID" value="NM_001355459.1"/>
</dbReference>
<dbReference type="RefSeq" id="NP_001342389.1">
    <property type="nucleotide sequence ID" value="NM_001355460.1"/>
</dbReference>
<dbReference type="RefSeq" id="NP_082670.1">
    <property type="nucleotide sequence ID" value="NM_028394.3"/>
</dbReference>
<dbReference type="RefSeq" id="XP_006503487.1">
    <property type="nucleotide sequence ID" value="XM_006503424.3"/>
</dbReference>
<dbReference type="RefSeq" id="XP_006503488.1">
    <property type="nucleotide sequence ID" value="XM_006503425.1"/>
</dbReference>
<dbReference type="RefSeq" id="XP_006503489.1">
    <property type="nucleotide sequence ID" value="XM_006503426.2"/>
</dbReference>
<dbReference type="SMR" id="Q9D6H2"/>
<dbReference type="BioGRID" id="215658">
    <property type="interactions" value="2"/>
</dbReference>
<dbReference type="ComplexPortal" id="CPX-5028">
    <property type="entry name" value="Intraflagellar transport complex B"/>
</dbReference>
<dbReference type="FunCoup" id="Q9D6H2">
    <property type="interactions" value="571"/>
</dbReference>
<dbReference type="STRING" id="10090.ENSMUSP00000048810"/>
<dbReference type="PhosphoSitePlus" id="Q9D6H2"/>
<dbReference type="SwissPalm" id="Q9D6H2"/>
<dbReference type="PaxDb" id="10090-ENSMUSP00000048810"/>
<dbReference type="PeptideAtlas" id="Q9D6H2"/>
<dbReference type="ProteomicsDB" id="267112"/>
<dbReference type="Pumba" id="Q9D6H2"/>
<dbReference type="Antibodypedia" id="33127">
    <property type="antibodies" value="83 antibodies from 22 providers"/>
</dbReference>
<dbReference type="Ensembl" id="ENSMUST00000046558.8">
    <property type="protein sequence ID" value="ENSMUSP00000048810.8"/>
    <property type="gene ID" value="ENSMUSG00000063172.14"/>
</dbReference>
<dbReference type="Ensembl" id="ENSMUST00000106749.8">
    <property type="protein sequence ID" value="ENSMUSP00000102360.2"/>
    <property type="gene ID" value="ENSMUSG00000063172.14"/>
</dbReference>
<dbReference type="Ensembl" id="ENSMUST00000152717.8">
    <property type="protein sequence ID" value="ENSMUSP00000118617.2"/>
    <property type="gene ID" value="ENSMUSG00000063172.14"/>
</dbReference>
<dbReference type="GeneID" id="72938"/>
<dbReference type="KEGG" id="mmu:72938"/>
<dbReference type="UCSC" id="uc008tzn.1">
    <property type="organism name" value="mouse"/>
</dbReference>
<dbReference type="AGR" id="MGI:1920188"/>
<dbReference type="CTD" id="51668"/>
<dbReference type="MGI" id="MGI:1920188">
    <property type="gene designation" value="Ift25"/>
</dbReference>
<dbReference type="VEuPathDB" id="HostDB:ENSMUSG00000063172"/>
<dbReference type="eggNOG" id="KOG3437">
    <property type="taxonomic scope" value="Eukaryota"/>
</dbReference>
<dbReference type="GeneTree" id="ENSGT00390000012620"/>
<dbReference type="HOGENOM" id="CLU_132151_0_0_1"/>
<dbReference type="InParanoid" id="Q9D6H2"/>
<dbReference type="OMA" id="MWTRNAK"/>
<dbReference type="OrthoDB" id="271080at2759"/>
<dbReference type="PhylomeDB" id="Q9D6H2"/>
<dbReference type="TreeFam" id="TF336031"/>
<dbReference type="Reactome" id="R-MMU-5620924">
    <property type="pathway name" value="Intraflagellar transport"/>
</dbReference>
<dbReference type="BioGRID-ORCS" id="72938">
    <property type="hits" value="4 hits in 78 CRISPR screens"/>
</dbReference>
<dbReference type="ChiTaRS" id="Hspb11">
    <property type="organism name" value="mouse"/>
</dbReference>
<dbReference type="PRO" id="PR:Q9D6H2"/>
<dbReference type="Proteomes" id="UP000000589">
    <property type="component" value="Chromosome 4"/>
</dbReference>
<dbReference type="RNAct" id="Q9D6H2">
    <property type="molecule type" value="protein"/>
</dbReference>
<dbReference type="Bgee" id="ENSMUSG00000063172">
    <property type="expression patterns" value="Expressed in saccule of membranous labyrinth and 262 other cell types or tissues"/>
</dbReference>
<dbReference type="GO" id="GO:0005813">
    <property type="term" value="C:centrosome"/>
    <property type="evidence" value="ECO:0000314"/>
    <property type="project" value="MGI"/>
</dbReference>
<dbReference type="GO" id="GO:0005929">
    <property type="term" value="C:cilium"/>
    <property type="evidence" value="ECO:0000314"/>
    <property type="project" value="MGI"/>
</dbReference>
<dbReference type="GO" id="GO:0030992">
    <property type="term" value="C:intraciliary transport particle B"/>
    <property type="evidence" value="ECO:0000314"/>
    <property type="project" value="UniProtKB"/>
</dbReference>
<dbReference type="GO" id="GO:0046872">
    <property type="term" value="F:metal ion binding"/>
    <property type="evidence" value="ECO:0007669"/>
    <property type="project" value="UniProtKB-KW"/>
</dbReference>
<dbReference type="GO" id="GO:0030154">
    <property type="term" value="P:cell differentiation"/>
    <property type="evidence" value="ECO:0007669"/>
    <property type="project" value="UniProtKB-KW"/>
</dbReference>
<dbReference type="GO" id="GO:0060271">
    <property type="term" value="P:cilium assembly"/>
    <property type="evidence" value="ECO:0000303"/>
    <property type="project" value="ComplexPortal"/>
</dbReference>
<dbReference type="GO" id="GO:0007507">
    <property type="term" value="P:heart development"/>
    <property type="evidence" value="ECO:0000315"/>
    <property type="project" value="MGI"/>
</dbReference>
<dbReference type="GO" id="GO:0035720">
    <property type="term" value="P:intraciliary anterograde transport"/>
    <property type="evidence" value="ECO:0000303"/>
    <property type="project" value="ComplexPortal"/>
</dbReference>
<dbReference type="GO" id="GO:0042073">
    <property type="term" value="P:intraciliary transport"/>
    <property type="evidence" value="ECO:0000305"/>
    <property type="project" value="MGI"/>
</dbReference>
<dbReference type="GO" id="GO:0001822">
    <property type="term" value="P:kidney development"/>
    <property type="evidence" value="ECO:0000315"/>
    <property type="project" value="UniProtKB"/>
</dbReference>
<dbReference type="GO" id="GO:0070986">
    <property type="term" value="P:left/right axis specification"/>
    <property type="evidence" value="ECO:0000315"/>
    <property type="project" value="MGI"/>
</dbReference>
<dbReference type="GO" id="GO:0030324">
    <property type="term" value="P:lung development"/>
    <property type="evidence" value="ECO:0000315"/>
    <property type="project" value="MGI"/>
</dbReference>
<dbReference type="GO" id="GO:0015031">
    <property type="term" value="P:protein transport"/>
    <property type="evidence" value="ECO:0007669"/>
    <property type="project" value="UniProtKB-KW"/>
</dbReference>
<dbReference type="GO" id="GO:0001501">
    <property type="term" value="P:skeletal system development"/>
    <property type="evidence" value="ECO:0000315"/>
    <property type="project" value="MGI"/>
</dbReference>
<dbReference type="GO" id="GO:0007224">
    <property type="term" value="P:smoothened signaling pathway"/>
    <property type="evidence" value="ECO:0000315"/>
    <property type="project" value="UniProtKB"/>
</dbReference>
<dbReference type="GO" id="GO:0007283">
    <property type="term" value="P:spermatogenesis"/>
    <property type="evidence" value="ECO:0000315"/>
    <property type="project" value="UniProtKB"/>
</dbReference>
<dbReference type="FunFam" id="2.60.120.260:FF:000081">
    <property type="entry name" value="Intraflagellar transport protein 25 homolog"/>
    <property type="match status" value="1"/>
</dbReference>
<dbReference type="Gene3D" id="2.60.120.260">
    <property type="entry name" value="Galactose-binding domain-like"/>
    <property type="match status" value="1"/>
</dbReference>
<dbReference type="InterPro" id="IPR000421">
    <property type="entry name" value="FA58C"/>
</dbReference>
<dbReference type="InterPro" id="IPR008979">
    <property type="entry name" value="Galactose-bd-like_sf"/>
</dbReference>
<dbReference type="InterPro" id="IPR033558">
    <property type="entry name" value="IFT25"/>
</dbReference>
<dbReference type="PANTHER" id="PTHR33906">
    <property type="entry name" value="INTRAFLAGELLAR TRANSPORT PROTEIN 25 HOMOLOG"/>
    <property type="match status" value="1"/>
</dbReference>
<dbReference type="PANTHER" id="PTHR33906:SF1">
    <property type="entry name" value="INTRAFLAGELLAR TRANSPORT PROTEIN 25 HOMOLOG"/>
    <property type="match status" value="1"/>
</dbReference>
<dbReference type="Pfam" id="PF00754">
    <property type="entry name" value="F5_F8_type_C"/>
    <property type="match status" value="1"/>
</dbReference>
<dbReference type="SUPFAM" id="SSF49785">
    <property type="entry name" value="Galactose-binding domain-like"/>
    <property type="match status" value="1"/>
</dbReference>
<organism>
    <name type="scientific">Mus musculus</name>
    <name type="common">Mouse</name>
    <dbReference type="NCBI Taxonomy" id="10090"/>
    <lineage>
        <taxon>Eukaryota</taxon>
        <taxon>Metazoa</taxon>
        <taxon>Chordata</taxon>
        <taxon>Craniata</taxon>
        <taxon>Vertebrata</taxon>
        <taxon>Euteleostomi</taxon>
        <taxon>Mammalia</taxon>
        <taxon>Eutheria</taxon>
        <taxon>Euarchontoglires</taxon>
        <taxon>Glires</taxon>
        <taxon>Rodentia</taxon>
        <taxon>Myomorpha</taxon>
        <taxon>Muroidea</taxon>
        <taxon>Muridae</taxon>
        <taxon>Murinae</taxon>
        <taxon>Mus</taxon>
        <taxon>Mus</taxon>
    </lineage>
</organism>
<evidence type="ECO:0000250" key="1"/>
<evidence type="ECO:0000269" key="2">
    <source>
    </source>
</evidence>
<evidence type="ECO:0000269" key="3">
    <source>
    </source>
</evidence>
<evidence type="ECO:0000269" key="4">
    <source>
    </source>
</evidence>
<evidence type="ECO:0000269" key="5">
    <source>
    </source>
</evidence>
<evidence type="ECO:0000269" key="6">
    <source>
    </source>
</evidence>
<evidence type="ECO:0000305" key="7"/>
<evidence type="ECO:0000305" key="8">
    <source>
    </source>
</evidence>
<accession>Q9D6H2</accession>
<accession>Q3TZR2</accession>
<sequence length="143" mass="16281">MRKVDLCSVTEGTEVILATSSDEKHPPENIIDGNPETFWTTTGMFPQEFIICFHKHVKIEKLVIQSYLVRTLRIEKTTSKEPLDFEQWVEKDLVHTEGQLQNEEIVARDGYATFLRFIIVSAFDHFASVHSISAEGLTVSSLP</sequence>
<name>IFT25_MOUSE</name>
<proteinExistence type="evidence at protein level"/>
<feature type="chain" id="PRO_0000058532" description="Intraflagellar transport protein 25 homolog">
    <location>
        <begin position="1"/>
        <end position="143"/>
    </location>
</feature>
<feature type="binding site" evidence="1">
    <location>
        <position position="29"/>
    </location>
    <ligand>
        <name>Ca(2+)</name>
        <dbReference type="ChEBI" id="CHEBI:29108"/>
    </ligand>
</feature>
<feature type="binding site" evidence="1">
    <location>
        <position position="32"/>
    </location>
    <ligand>
        <name>Ca(2+)</name>
        <dbReference type="ChEBI" id="CHEBI:29108"/>
    </ligand>
</feature>
<feature type="binding site" evidence="1">
    <location>
        <position position="37"/>
    </location>
    <ligand>
        <name>Ca(2+)</name>
        <dbReference type="ChEBI" id="CHEBI:29108"/>
    </ligand>
</feature>
<feature type="sequence conflict" description="In Ref. 1; BAB28934." evidence="7" ref="1">
    <original>I</original>
    <variation>T</variation>
    <location>
        <position position="74"/>
    </location>
</feature>
<reference key="1">
    <citation type="journal article" date="2005" name="Science">
        <title>The transcriptional landscape of the mammalian genome.</title>
        <authorList>
            <person name="Carninci P."/>
            <person name="Kasukawa T."/>
            <person name="Katayama S."/>
            <person name="Gough J."/>
            <person name="Frith M.C."/>
            <person name="Maeda N."/>
            <person name="Oyama R."/>
            <person name="Ravasi T."/>
            <person name="Lenhard B."/>
            <person name="Wells C."/>
            <person name="Kodzius R."/>
            <person name="Shimokawa K."/>
            <person name="Bajic V.B."/>
            <person name="Brenner S.E."/>
            <person name="Batalov S."/>
            <person name="Forrest A.R."/>
            <person name="Zavolan M."/>
            <person name="Davis M.J."/>
            <person name="Wilming L.G."/>
            <person name="Aidinis V."/>
            <person name="Allen J.E."/>
            <person name="Ambesi-Impiombato A."/>
            <person name="Apweiler R."/>
            <person name="Aturaliya R.N."/>
            <person name="Bailey T.L."/>
            <person name="Bansal M."/>
            <person name="Baxter L."/>
            <person name="Beisel K.W."/>
            <person name="Bersano T."/>
            <person name="Bono H."/>
            <person name="Chalk A.M."/>
            <person name="Chiu K.P."/>
            <person name="Choudhary V."/>
            <person name="Christoffels A."/>
            <person name="Clutterbuck D.R."/>
            <person name="Crowe M.L."/>
            <person name="Dalla E."/>
            <person name="Dalrymple B.P."/>
            <person name="de Bono B."/>
            <person name="Della Gatta G."/>
            <person name="di Bernardo D."/>
            <person name="Down T."/>
            <person name="Engstrom P."/>
            <person name="Fagiolini M."/>
            <person name="Faulkner G."/>
            <person name="Fletcher C.F."/>
            <person name="Fukushima T."/>
            <person name="Furuno M."/>
            <person name="Futaki S."/>
            <person name="Gariboldi M."/>
            <person name="Georgii-Hemming P."/>
            <person name="Gingeras T.R."/>
            <person name="Gojobori T."/>
            <person name="Green R.E."/>
            <person name="Gustincich S."/>
            <person name="Harbers M."/>
            <person name="Hayashi Y."/>
            <person name="Hensch T.K."/>
            <person name="Hirokawa N."/>
            <person name="Hill D."/>
            <person name="Huminiecki L."/>
            <person name="Iacono M."/>
            <person name="Ikeo K."/>
            <person name="Iwama A."/>
            <person name="Ishikawa T."/>
            <person name="Jakt M."/>
            <person name="Kanapin A."/>
            <person name="Katoh M."/>
            <person name="Kawasawa Y."/>
            <person name="Kelso J."/>
            <person name="Kitamura H."/>
            <person name="Kitano H."/>
            <person name="Kollias G."/>
            <person name="Krishnan S.P."/>
            <person name="Kruger A."/>
            <person name="Kummerfeld S.K."/>
            <person name="Kurochkin I.V."/>
            <person name="Lareau L.F."/>
            <person name="Lazarevic D."/>
            <person name="Lipovich L."/>
            <person name="Liu J."/>
            <person name="Liuni S."/>
            <person name="McWilliam S."/>
            <person name="Madan Babu M."/>
            <person name="Madera M."/>
            <person name="Marchionni L."/>
            <person name="Matsuda H."/>
            <person name="Matsuzawa S."/>
            <person name="Miki H."/>
            <person name="Mignone F."/>
            <person name="Miyake S."/>
            <person name="Morris K."/>
            <person name="Mottagui-Tabar S."/>
            <person name="Mulder N."/>
            <person name="Nakano N."/>
            <person name="Nakauchi H."/>
            <person name="Ng P."/>
            <person name="Nilsson R."/>
            <person name="Nishiguchi S."/>
            <person name="Nishikawa S."/>
            <person name="Nori F."/>
            <person name="Ohara O."/>
            <person name="Okazaki Y."/>
            <person name="Orlando V."/>
            <person name="Pang K.C."/>
            <person name="Pavan W.J."/>
            <person name="Pavesi G."/>
            <person name="Pesole G."/>
            <person name="Petrovsky N."/>
            <person name="Piazza S."/>
            <person name="Reed J."/>
            <person name="Reid J.F."/>
            <person name="Ring B.Z."/>
            <person name="Ringwald M."/>
            <person name="Rost B."/>
            <person name="Ruan Y."/>
            <person name="Salzberg S.L."/>
            <person name="Sandelin A."/>
            <person name="Schneider C."/>
            <person name="Schoenbach C."/>
            <person name="Sekiguchi K."/>
            <person name="Semple C.A."/>
            <person name="Seno S."/>
            <person name="Sessa L."/>
            <person name="Sheng Y."/>
            <person name="Shibata Y."/>
            <person name="Shimada H."/>
            <person name="Shimada K."/>
            <person name="Silva D."/>
            <person name="Sinclair B."/>
            <person name="Sperling S."/>
            <person name="Stupka E."/>
            <person name="Sugiura K."/>
            <person name="Sultana R."/>
            <person name="Takenaka Y."/>
            <person name="Taki K."/>
            <person name="Tammoja K."/>
            <person name="Tan S.L."/>
            <person name="Tang S."/>
            <person name="Taylor M.S."/>
            <person name="Tegner J."/>
            <person name="Teichmann S.A."/>
            <person name="Ueda H.R."/>
            <person name="van Nimwegen E."/>
            <person name="Verardo R."/>
            <person name="Wei C.L."/>
            <person name="Yagi K."/>
            <person name="Yamanishi H."/>
            <person name="Zabarovsky E."/>
            <person name="Zhu S."/>
            <person name="Zimmer A."/>
            <person name="Hide W."/>
            <person name="Bult C."/>
            <person name="Grimmond S.M."/>
            <person name="Teasdale R.D."/>
            <person name="Liu E.T."/>
            <person name="Brusic V."/>
            <person name="Quackenbush J."/>
            <person name="Wahlestedt C."/>
            <person name="Mattick J.S."/>
            <person name="Hume D.A."/>
            <person name="Kai C."/>
            <person name="Sasaki D."/>
            <person name="Tomaru Y."/>
            <person name="Fukuda S."/>
            <person name="Kanamori-Katayama M."/>
            <person name="Suzuki M."/>
            <person name="Aoki J."/>
            <person name="Arakawa T."/>
            <person name="Iida J."/>
            <person name="Imamura K."/>
            <person name="Itoh M."/>
            <person name="Kato T."/>
            <person name="Kawaji H."/>
            <person name="Kawagashira N."/>
            <person name="Kawashima T."/>
            <person name="Kojima M."/>
            <person name="Kondo S."/>
            <person name="Konno H."/>
            <person name="Nakano K."/>
            <person name="Ninomiya N."/>
            <person name="Nishio T."/>
            <person name="Okada M."/>
            <person name="Plessy C."/>
            <person name="Shibata K."/>
            <person name="Shiraki T."/>
            <person name="Suzuki S."/>
            <person name="Tagami M."/>
            <person name="Waki K."/>
            <person name="Watahiki A."/>
            <person name="Okamura-Oho Y."/>
            <person name="Suzuki H."/>
            <person name="Kawai J."/>
            <person name="Hayashizaki Y."/>
        </authorList>
    </citation>
    <scope>NUCLEOTIDE SEQUENCE [LARGE SCALE MRNA]</scope>
    <source>
        <strain>C57BL/6J</strain>
        <strain>NOD</strain>
        <tissue>Hippocampus</tissue>
        <tissue>Spleen</tissue>
    </source>
</reference>
<reference key="2">
    <citation type="journal article" date="2009" name="PLoS Biol.">
        <title>Lineage-specific biology revealed by a finished genome assembly of the mouse.</title>
        <authorList>
            <person name="Church D.M."/>
            <person name="Goodstadt L."/>
            <person name="Hillier L.W."/>
            <person name="Zody M.C."/>
            <person name="Goldstein S."/>
            <person name="She X."/>
            <person name="Bult C.J."/>
            <person name="Agarwala R."/>
            <person name="Cherry J.L."/>
            <person name="DiCuccio M."/>
            <person name="Hlavina W."/>
            <person name="Kapustin Y."/>
            <person name="Meric P."/>
            <person name="Maglott D."/>
            <person name="Birtle Z."/>
            <person name="Marques A.C."/>
            <person name="Graves T."/>
            <person name="Zhou S."/>
            <person name="Teague B."/>
            <person name="Potamousis K."/>
            <person name="Churas C."/>
            <person name="Place M."/>
            <person name="Herschleb J."/>
            <person name="Runnheim R."/>
            <person name="Forrest D."/>
            <person name="Amos-Landgraf J."/>
            <person name="Schwartz D.C."/>
            <person name="Cheng Z."/>
            <person name="Lindblad-Toh K."/>
            <person name="Eichler E.E."/>
            <person name="Ponting C.P."/>
        </authorList>
    </citation>
    <scope>NUCLEOTIDE SEQUENCE [LARGE SCALE GENOMIC DNA]</scope>
    <source>
        <strain>C57BL/6J</strain>
    </source>
</reference>
<reference key="3">
    <citation type="submission" date="2005-07" db="EMBL/GenBank/DDBJ databases">
        <authorList>
            <person name="Mural R.J."/>
            <person name="Adams M.D."/>
            <person name="Myers E.W."/>
            <person name="Smith H.O."/>
            <person name="Venter J.C."/>
        </authorList>
    </citation>
    <scope>NUCLEOTIDE SEQUENCE [LARGE SCALE GENOMIC DNA]</scope>
</reference>
<reference key="4">
    <citation type="journal article" date="2009" name="Cell Motil. Cytoskeleton">
        <title>Characterization of mouse IFT complex B.</title>
        <authorList>
            <person name="Follit J.A."/>
            <person name="Xu F."/>
            <person name="Keady B.T."/>
            <person name="Pazour G.J."/>
        </authorList>
    </citation>
    <scope>IDENTIFICATION IN THE IFT COMPLEX B</scope>
    <scope>INTERACTION WITH IFT88</scope>
    <scope>SUBCELLULAR LOCATION</scope>
</reference>
<reference key="5">
    <citation type="journal article" date="2010" name="Cell">
        <title>A tissue-specific atlas of mouse protein phosphorylation and expression.</title>
        <authorList>
            <person name="Huttlin E.L."/>
            <person name="Jedrychowski M.P."/>
            <person name="Elias J.E."/>
            <person name="Goswami T."/>
            <person name="Rad R."/>
            <person name="Beausoleil S.A."/>
            <person name="Villen J."/>
            <person name="Haas W."/>
            <person name="Sowa M.E."/>
            <person name="Gygi S.P."/>
        </authorList>
    </citation>
    <scope>IDENTIFICATION BY MASS SPECTROMETRY [LARGE SCALE ANALYSIS]</scope>
    <source>
        <tissue>Brain</tissue>
        <tissue>Kidney</tissue>
        <tissue>Lung</tissue>
        <tissue>Spleen</tissue>
        <tissue>Testis</tissue>
    </source>
</reference>
<reference key="6">
    <citation type="journal article" date="2012" name="Dev. Cell">
        <title>IFT25 links the signal-dependent movement of Hedgehog components to intraflagellar transport.</title>
        <authorList>
            <person name="Keady B.T."/>
            <person name="Samtani R."/>
            <person name="Tobita K."/>
            <person name="Tsuchya M."/>
            <person name="San Agustin J.T."/>
            <person name="Follit J.A."/>
            <person name="Jonassen J.A."/>
            <person name="Subramanian R."/>
            <person name="Lo C.W."/>
            <person name="Pazour G.J."/>
        </authorList>
    </citation>
    <scope>FUNCTION</scope>
    <scope>DISRUPTION PHENOTYPE</scope>
</reference>
<reference key="7">
    <citation type="journal article" date="2017" name="Biol. Reprod.">
        <title>IFT25, an intraflagellar transporter protein dispensable for ciliogenesis in somatic cells, is essential for sperm flagella formation.</title>
        <authorList>
            <person name="Liu H."/>
            <person name="Li W."/>
            <person name="Zhang Y."/>
            <person name="Zhang Z."/>
            <person name="Shang X."/>
            <person name="Zhang L."/>
            <person name="Zhang S."/>
            <person name="Li Y."/>
            <person name="Somoza A.V."/>
            <person name="Delpi B."/>
            <person name="Gerton G.L."/>
            <person name="Foster J.A."/>
            <person name="Hess R.A."/>
            <person name="Pazour G.J."/>
            <person name="Zhang Z."/>
        </authorList>
    </citation>
    <scope>FUNCTION</scope>
    <scope>DISRUPTION PHENOTYPE</scope>
    <scope>TISSUE SPECIFICITY</scope>
    <scope>INTERACTION WITH IFT27</scope>
</reference>
<reference key="8">
    <citation type="journal article" date="2017" name="Dev. Biol.">
        <title>Intraflagellar transporter protein (IFT27), an IFT25 binding partner, is essential for male fertility and spermiogenesis in mice.</title>
        <authorList>
            <person name="Zhang Y."/>
            <person name="Liu H."/>
            <person name="Li W."/>
            <person name="Zhang Z."/>
            <person name="Shang X."/>
            <person name="Zhang D."/>
            <person name="Li Y."/>
            <person name="Zhang S."/>
            <person name="Liu J."/>
            <person name="Hess R.A."/>
            <person name="Pazour G.J."/>
            <person name="Zhang Z."/>
        </authorList>
    </citation>
    <scope>TISSUE SPECIFICITY</scope>
    <scope>DISRUPTION PHENOTYPE</scope>
</reference>
<reference key="9">
    <citation type="journal article" date="2018" name="Mech. Dev.">
        <title>Ift25 is not a cystic kidney disease gene but is required for early steps of kidney development.</title>
        <authorList>
            <person name="Desai P.B."/>
            <person name="San Agustin J.T."/>
            <person name="Stuck M.W."/>
            <person name="Jonassen J.A."/>
            <person name="Bates C.M."/>
            <person name="Pazour G.J."/>
        </authorList>
    </citation>
    <scope>FUNCTION</scope>
    <scope>DISRUPTION PHENOTYPE</scope>
</reference>